<proteinExistence type="inferred from homology"/>
<sequence>MLSVPASSRIDFAGSPRPTVGVEWEFALVDAHTRDLSNEAATVIAEIGETPHVHKELLRNTVEVVTGICENTGEAMADLHDTLKVVRRIVRDRGMELFCAGTHPFANWSTQQLTDAPRYAELIKRTQWWGRQMLIWGVHVHVGISSAHKVMPIISSLLNQYPHLLALSASSPYWDGSDTGYASNRAMMFQQLPTAGLPFQFQSWPEFERFVHDQKKTGIIDHMNEIRWDIRPSPHLGTVEIRVFDGVSNIAELGSLVALTHCLVVDLDRRLDAGEQLPVMPPWHVQENKWRAARYGLDAEIILDADSNERLVTEDLDDLLTRLQPVARSLDCADELAGVAEIYRHGASYQRQRRVAEEHDGDLLAVVDALVAELEL</sequence>
<name>GCS21_MYCSK</name>
<comment type="function">
    <text evidence="1">ATP-dependent carboxylate-amine ligase which exhibits weak glutamate--cysteine ligase activity.</text>
</comment>
<comment type="catalytic activity">
    <reaction evidence="1">
        <text>L-cysteine + L-glutamate + ATP = gamma-L-glutamyl-L-cysteine + ADP + phosphate + H(+)</text>
        <dbReference type="Rhea" id="RHEA:13285"/>
        <dbReference type="ChEBI" id="CHEBI:15378"/>
        <dbReference type="ChEBI" id="CHEBI:29985"/>
        <dbReference type="ChEBI" id="CHEBI:30616"/>
        <dbReference type="ChEBI" id="CHEBI:35235"/>
        <dbReference type="ChEBI" id="CHEBI:43474"/>
        <dbReference type="ChEBI" id="CHEBI:58173"/>
        <dbReference type="ChEBI" id="CHEBI:456216"/>
        <dbReference type="EC" id="6.3.2.2"/>
    </reaction>
</comment>
<comment type="similarity">
    <text evidence="1">Belongs to the glutamate--cysteine ligase type 2 family. YbdK subfamily.</text>
</comment>
<keyword id="KW-0067">ATP-binding</keyword>
<keyword id="KW-0436">Ligase</keyword>
<keyword id="KW-0547">Nucleotide-binding</keyword>
<feature type="chain" id="PRO_0000291497" description="Putative glutamate--cysteine ligase 2-1">
    <location>
        <begin position="1"/>
        <end position="376"/>
    </location>
</feature>
<organism>
    <name type="scientific">Mycobacterium sp. (strain KMS)</name>
    <dbReference type="NCBI Taxonomy" id="189918"/>
    <lineage>
        <taxon>Bacteria</taxon>
        <taxon>Bacillati</taxon>
        <taxon>Actinomycetota</taxon>
        <taxon>Actinomycetes</taxon>
        <taxon>Mycobacteriales</taxon>
        <taxon>Mycobacteriaceae</taxon>
        <taxon>Mycobacterium</taxon>
    </lineage>
</organism>
<protein>
    <recommendedName>
        <fullName evidence="1">Putative glutamate--cysteine ligase 2-1</fullName>
        <ecNumber evidence="1">6.3.2.2</ecNumber>
    </recommendedName>
    <alternativeName>
        <fullName evidence="1">Gamma-glutamylcysteine synthetase 2-1</fullName>
        <shortName evidence="1">GCS 2-1</shortName>
        <shortName evidence="1">Gamma-GCS 2-1</shortName>
    </alternativeName>
</protein>
<dbReference type="EC" id="6.3.2.2" evidence="1"/>
<dbReference type="EMBL" id="CP000518">
    <property type="protein sequence ID" value="ABL89801.1"/>
    <property type="molecule type" value="Genomic_DNA"/>
</dbReference>
<dbReference type="SMR" id="A1UAE3"/>
<dbReference type="STRING" id="189918.Mkms_0585"/>
<dbReference type="KEGG" id="mkm:Mkms_0585"/>
<dbReference type="HOGENOM" id="CLU_044848_1_0_11"/>
<dbReference type="OrthoDB" id="9769628at2"/>
<dbReference type="GO" id="GO:0005524">
    <property type="term" value="F:ATP binding"/>
    <property type="evidence" value="ECO:0007669"/>
    <property type="project" value="UniProtKB-KW"/>
</dbReference>
<dbReference type="GO" id="GO:0004357">
    <property type="term" value="F:glutamate-cysteine ligase activity"/>
    <property type="evidence" value="ECO:0007669"/>
    <property type="project" value="UniProtKB-EC"/>
</dbReference>
<dbReference type="GO" id="GO:0042398">
    <property type="term" value="P:modified amino acid biosynthetic process"/>
    <property type="evidence" value="ECO:0007669"/>
    <property type="project" value="InterPro"/>
</dbReference>
<dbReference type="Gene3D" id="3.30.590.20">
    <property type="match status" value="1"/>
</dbReference>
<dbReference type="HAMAP" id="MF_01609">
    <property type="entry name" value="Glu_cys_ligase_2"/>
    <property type="match status" value="1"/>
</dbReference>
<dbReference type="InterPro" id="IPR050141">
    <property type="entry name" value="GCL_type2/YbdK_subfam"/>
</dbReference>
<dbReference type="InterPro" id="IPR006336">
    <property type="entry name" value="GCS2"/>
</dbReference>
<dbReference type="InterPro" id="IPR014746">
    <property type="entry name" value="Gln_synth/guanido_kin_cat_dom"/>
</dbReference>
<dbReference type="InterPro" id="IPR011793">
    <property type="entry name" value="YbdK"/>
</dbReference>
<dbReference type="NCBIfam" id="TIGR02050">
    <property type="entry name" value="gshA_cyan_rel"/>
    <property type="match status" value="1"/>
</dbReference>
<dbReference type="NCBIfam" id="NF010042">
    <property type="entry name" value="PRK13517.1-2"/>
    <property type="match status" value="1"/>
</dbReference>
<dbReference type="NCBIfam" id="NF010043">
    <property type="entry name" value="PRK13517.1-3"/>
    <property type="match status" value="1"/>
</dbReference>
<dbReference type="NCBIfam" id="NF010044">
    <property type="entry name" value="PRK13517.1-4"/>
    <property type="match status" value="1"/>
</dbReference>
<dbReference type="PANTHER" id="PTHR36510">
    <property type="entry name" value="GLUTAMATE--CYSTEINE LIGASE 2-RELATED"/>
    <property type="match status" value="1"/>
</dbReference>
<dbReference type="PANTHER" id="PTHR36510:SF1">
    <property type="entry name" value="GLUTAMATE--CYSTEINE LIGASE 2-RELATED"/>
    <property type="match status" value="1"/>
</dbReference>
<dbReference type="Pfam" id="PF04107">
    <property type="entry name" value="GCS2"/>
    <property type="match status" value="1"/>
</dbReference>
<dbReference type="SUPFAM" id="SSF55931">
    <property type="entry name" value="Glutamine synthetase/guanido kinase"/>
    <property type="match status" value="1"/>
</dbReference>
<reference key="1">
    <citation type="submission" date="2006-12" db="EMBL/GenBank/DDBJ databases">
        <title>Complete sequence of chromosome of Mycobacterium sp. KMS.</title>
        <authorList>
            <consortium name="US DOE Joint Genome Institute"/>
            <person name="Copeland A."/>
            <person name="Lucas S."/>
            <person name="Lapidus A."/>
            <person name="Barry K."/>
            <person name="Detter J.C."/>
            <person name="Glavina del Rio T."/>
            <person name="Hammon N."/>
            <person name="Israni S."/>
            <person name="Dalin E."/>
            <person name="Tice H."/>
            <person name="Pitluck S."/>
            <person name="Kiss H."/>
            <person name="Brettin T."/>
            <person name="Bruce D."/>
            <person name="Han C."/>
            <person name="Tapia R."/>
            <person name="Gilna P."/>
            <person name="Schmutz J."/>
            <person name="Larimer F."/>
            <person name="Land M."/>
            <person name="Hauser L."/>
            <person name="Kyrpides N."/>
            <person name="Mikhailova N."/>
            <person name="Miller C.D."/>
            <person name="Richardson P."/>
        </authorList>
    </citation>
    <scope>NUCLEOTIDE SEQUENCE [LARGE SCALE GENOMIC DNA]</scope>
    <source>
        <strain>KMS</strain>
    </source>
</reference>
<gene>
    <name type="ordered locus">Mkms_0585</name>
</gene>
<accession>A1UAE3</accession>
<evidence type="ECO:0000255" key="1">
    <source>
        <dbReference type="HAMAP-Rule" id="MF_01609"/>
    </source>
</evidence>